<comment type="function">
    <text evidence="1">Involved in protein export. Acts as a chaperone by maintaining the newly synthesized protein in an open conformation. Functions as a peptidyl-prolyl cis-trans isomerase.</text>
</comment>
<comment type="catalytic activity">
    <reaction evidence="1">
        <text>[protein]-peptidylproline (omega=180) = [protein]-peptidylproline (omega=0)</text>
        <dbReference type="Rhea" id="RHEA:16237"/>
        <dbReference type="Rhea" id="RHEA-COMP:10747"/>
        <dbReference type="Rhea" id="RHEA-COMP:10748"/>
        <dbReference type="ChEBI" id="CHEBI:83833"/>
        <dbReference type="ChEBI" id="CHEBI:83834"/>
        <dbReference type="EC" id="5.2.1.8"/>
    </reaction>
</comment>
<comment type="subcellular location">
    <subcellularLocation>
        <location>Cytoplasm</location>
    </subcellularLocation>
    <text evidence="1">About half TF is bound to the ribosome near the polypeptide exit tunnel while the other half is free in the cytoplasm.</text>
</comment>
<comment type="domain">
    <text evidence="1">Consists of 3 domains; the N-terminus binds the ribosome, the middle domain has PPIase activity, while the C-terminus has intrinsic chaperone activity on its own.</text>
</comment>
<comment type="similarity">
    <text evidence="1">Belongs to the FKBP-type PPIase family. Tig subfamily.</text>
</comment>
<feature type="chain" id="PRO_1000079035" description="Trigger factor">
    <location>
        <begin position="1"/>
        <end position="430"/>
    </location>
</feature>
<feature type="domain" description="PPIase FKBP-type" evidence="1">
    <location>
        <begin position="163"/>
        <end position="248"/>
    </location>
</feature>
<reference key="1">
    <citation type="journal article" date="2008" name="Proc. Natl. Acad. Sci. U.S.A.">
        <title>The genome of Clostridium kluyveri, a strict anaerobe with unique metabolic features.</title>
        <authorList>
            <person name="Seedorf H."/>
            <person name="Fricke W.F."/>
            <person name="Veith B."/>
            <person name="Brueggemann H."/>
            <person name="Liesegang H."/>
            <person name="Strittmatter A."/>
            <person name="Miethke M."/>
            <person name="Buckel W."/>
            <person name="Hinderberger J."/>
            <person name="Li F."/>
            <person name="Hagemeier C."/>
            <person name="Thauer R.K."/>
            <person name="Gottschalk G."/>
        </authorList>
    </citation>
    <scope>NUCLEOTIDE SEQUENCE [LARGE SCALE GENOMIC DNA]</scope>
    <source>
        <strain>ATCC 8527 / DSM 555 / NBRC 12016 / NCIMB 10680 / K1</strain>
    </source>
</reference>
<sequence length="430" mass="49439">MNVKMEKIEENVVKLEITVEADKFNESMKKAFAKNAKKFNIPGFRKGKAPMNIIKKYYGEGVFYEDAMSFCCESTYPDALKENNVNPVDYPKIEVVQIGEGKEFIYTAEVTVFPEVKLGEYKGVEVKKNTYDVKEEDIEQELKNMQQKDARIETKENGSIENGNIAIIDFKGFVDGKEFEGGEGQDYQLEIGSGTFIDNFEEQLIGLNAGDSKEVNVKFPEEYGIDDLNGKEAVFKVTVKEIKVKEIPELDDEFAKEVSEFDTLDEVKEDIRNKKQEANKLREEREFEEAVLEAVCSNTEINIPEVMVEKEVDNMIRDLETRLKYQGLDLETYYKYTNNDEQKVREYMRETSEKKVKADLVITEIAKVEKVEASDEEIKEKATEIAKQYGSDDVEKMAKIILDGQKEYLKMQIVNEKVMKMLVDSSKIIA</sequence>
<dbReference type="EC" id="5.2.1.8" evidence="1"/>
<dbReference type="EMBL" id="CP000673">
    <property type="protein sequence ID" value="EDK35355.1"/>
    <property type="molecule type" value="Genomic_DNA"/>
</dbReference>
<dbReference type="RefSeq" id="WP_012103685.1">
    <property type="nucleotide sequence ID" value="NC_009706.1"/>
</dbReference>
<dbReference type="SMR" id="A5N2K9"/>
<dbReference type="STRING" id="431943.CKL_3352"/>
<dbReference type="KEGG" id="ckl:CKL_3352"/>
<dbReference type="eggNOG" id="COG0544">
    <property type="taxonomic scope" value="Bacteria"/>
</dbReference>
<dbReference type="HOGENOM" id="CLU_033058_3_2_9"/>
<dbReference type="Proteomes" id="UP000002411">
    <property type="component" value="Chromosome"/>
</dbReference>
<dbReference type="GO" id="GO:0005737">
    <property type="term" value="C:cytoplasm"/>
    <property type="evidence" value="ECO:0007669"/>
    <property type="project" value="UniProtKB-SubCell"/>
</dbReference>
<dbReference type="GO" id="GO:0003755">
    <property type="term" value="F:peptidyl-prolyl cis-trans isomerase activity"/>
    <property type="evidence" value="ECO:0007669"/>
    <property type="project" value="UniProtKB-UniRule"/>
</dbReference>
<dbReference type="GO" id="GO:0044183">
    <property type="term" value="F:protein folding chaperone"/>
    <property type="evidence" value="ECO:0007669"/>
    <property type="project" value="TreeGrafter"/>
</dbReference>
<dbReference type="GO" id="GO:0043022">
    <property type="term" value="F:ribosome binding"/>
    <property type="evidence" value="ECO:0007669"/>
    <property type="project" value="TreeGrafter"/>
</dbReference>
<dbReference type="GO" id="GO:0051083">
    <property type="term" value="P:'de novo' cotranslational protein folding"/>
    <property type="evidence" value="ECO:0007669"/>
    <property type="project" value="TreeGrafter"/>
</dbReference>
<dbReference type="GO" id="GO:0051301">
    <property type="term" value="P:cell division"/>
    <property type="evidence" value="ECO:0007669"/>
    <property type="project" value="UniProtKB-KW"/>
</dbReference>
<dbReference type="GO" id="GO:0061077">
    <property type="term" value="P:chaperone-mediated protein folding"/>
    <property type="evidence" value="ECO:0007669"/>
    <property type="project" value="TreeGrafter"/>
</dbReference>
<dbReference type="GO" id="GO:0015031">
    <property type="term" value="P:protein transport"/>
    <property type="evidence" value="ECO:0007669"/>
    <property type="project" value="UniProtKB-UniRule"/>
</dbReference>
<dbReference type="GO" id="GO:0043335">
    <property type="term" value="P:protein unfolding"/>
    <property type="evidence" value="ECO:0007669"/>
    <property type="project" value="TreeGrafter"/>
</dbReference>
<dbReference type="FunFam" id="3.10.50.40:FF:000001">
    <property type="entry name" value="Trigger factor"/>
    <property type="match status" value="1"/>
</dbReference>
<dbReference type="Gene3D" id="3.10.50.40">
    <property type="match status" value="1"/>
</dbReference>
<dbReference type="Gene3D" id="3.30.70.1050">
    <property type="entry name" value="Trigger factor ribosome-binding domain"/>
    <property type="match status" value="1"/>
</dbReference>
<dbReference type="Gene3D" id="1.10.3120.10">
    <property type="entry name" value="Trigger factor, C-terminal domain"/>
    <property type="match status" value="1"/>
</dbReference>
<dbReference type="HAMAP" id="MF_00303">
    <property type="entry name" value="Trigger_factor_Tig"/>
    <property type="match status" value="1"/>
</dbReference>
<dbReference type="InterPro" id="IPR046357">
    <property type="entry name" value="PPIase_dom_sf"/>
</dbReference>
<dbReference type="InterPro" id="IPR001179">
    <property type="entry name" value="PPIase_FKBP_dom"/>
</dbReference>
<dbReference type="InterPro" id="IPR005215">
    <property type="entry name" value="Trig_fac"/>
</dbReference>
<dbReference type="InterPro" id="IPR008880">
    <property type="entry name" value="Trigger_fac_C"/>
</dbReference>
<dbReference type="InterPro" id="IPR037041">
    <property type="entry name" value="Trigger_fac_C_sf"/>
</dbReference>
<dbReference type="InterPro" id="IPR008881">
    <property type="entry name" value="Trigger_fac_ribosome-bd_bac"/>
</dbReference>
<dbReference type="InterPro" id="IPR036611">
    <property type="entry name" value="Trigger_fac_ribosome-bd_sf"/>
</dbReference>
<dbReference type="InterPro" id="IPR027304">
    <property type="entry name" value="Trigger_fact/SurA_dom_sf"/>
</dbReference>
<dbReference type="NCBIfam" id="TIGR00115">
    <property type="entry name" value="tig"/>
    <property type="match status" value="1"/>
</dbReference>
<dbReference type="PANTHER" id="PTHR30560">
    <property type="entry name" value="TRIGGER FACTOR CHAPERONE AND PEPTIDYL-PROLYL CIS/TRANS ISOMERASE"/>
    <property type="match status" value="1"/>
</dbReference>
<dbReference type="PANTHER" id="PTHR30560:SF3">
    <property type="entry name" value="TRIGGER FACTOR-LIKE PROTEIN TIG, CHLOROPLASTIC"/>
    <property type="match status" value="1"/>
</dbReference>
<dbReference type="Pfam" id="PF00254">
    <property type="entry name" value="FKBP_C"/>
    <property type="match status" value="1"/>
</dbReference>
<dbReference type="Pfam" id="PF05698">
    <property type="entry name" value="Trigger_C"/>
    <property type="match status" value="1"/>
</dbReference>
<dbReference type="Pfam" id="PF05697">
    <property type="entry name" value="Trigger_N"/>
    <property type="match status" value="1"/>
</dbReference>
<dbReference type="PIRSF" id="PIRSF003095">
    <property type="entry name" value="Trigger_factor"/>
    <property type="match status" value="1"/>
</dbReference>
<dbReference type="SUPFAM" id="SSF54534">
    <property type="entry name" value="FKBP-like"/>
    <property type="match status" value="1"/>
</dbReference>
<dbReference type="SUPFAM" id="SSF109998">
    <property type="entry name" value="Triger factor/SurA peptide-binding domain-like"/>
    <property type="match status" value="1"/>
</dbReference>
<dbReference type="SUPFAM" id="SSF102735">
    <property type="entry name" value="Trigger factor ribosome-binding domain"/>
    <property type="match status" value="1"/>
</dbReference>
<dbReference type="PROSITE" id="PS50059">
    <property type="entry name" value="FKBP_PPIASE"/>
    <property type="match status" value="1"/>
</dbReference>
<name>TIG_CLOK5</name>
<proteinExistence type="inferred from homology"/>
<keyword id="KW-0131">Cell cycle</keyword>
<keyword id="KW-0132">Cell division</keyword>
<keyword id="KW-0143">Chaperone</keyword>
<keyword id="KW-0963">Cytoplasm</keyword>
<keyword id="KW-0413">Isomerase</keyword>
<keyword id="KW-1185">Reference proteome</keyword>
<keyword id="KW-0697">Rotamase</keyword>
<accession>A5N2K9</accession>
<gene>
    <name evidence="1" type="primary">tig</name>
    <name type="ordered locus">CKL_3352</name>
</gene>
<organism>
    <name type="scientific">Clostridium kluyveri (strain ATCC 8527 / DSM 555 / NBRC 12016 / NCIMB 10680 / K1)</name>
    <dbReference type="NCBI Taxonomy" id="431943"/>
    <lineage>
        <taxon>Bacteria</taxon>
        <taxon>Bacillati</taxon>
        <taxon>Bacillota</taxon>
        <taxon>Clostridia</taxon>
        <taxon>Eubacteriales</taxon>
        <taxon>Clostridiaceae</taxon>
        <taxon>Clostridium</taxon>
    </lineage>
</organism>
<protein>
    <recommendedName>
        <fullName evidence="1">Trigger factor</fullName>
        <shortName evidence="1">TF</shortName>
        <ecNumber evidence="1">5.2.1.8</ecNumber>
    </recommendedName>
    <alternativeName>
        <fullName evidence="1">PPIase</fullName>
    </alternativeName>
</protein>
<evidence type="ECO:0000255" key="1">
    <source>
        <dbReference type="HAMAP-Rule" id="MF_00303"/>
    </source>
</evidence>